<evidence type="ECO:0000250" key="1"/>
<evidence type="ECO:0000305" key="2"/>
<reference key="1">
    <citation type="journal article" date="2003" name="Proc. Natl. Acad. Sci. U.S.A.">
        <title>Reductive genome evolution in Buchnera aphidicola.</title>
        <authorList>
            <person name="van Ham R.C.H.J."/>
            <person name="Kamerbeek J."/>
            <person name="Palacios C."/>
            <person name="Rausell C."/>
            <person name="Abascal F."/>
            <person name="Bastolla U."/>
            <person name="Fernandez J.M."/>
            <person name="Jimenez L."/>
            <person name="Postigo M."/>
            <person name="Silva F.J."/>
            <person name="Tamames J."/>
            <person name="Viguera E."/>
            <person name="Latorre A."/>
            <person name="Valencia A."/>
            <person name="Moran F."/>
            <person name="Moya A."/>
        </authorList>
    </citation>
    <scope>NUCLEOTIDE SEQUENCE [LARGE SCALE GENOMIC DNA]</scope>
    <source>
        <strain>Bp</strain>
    </source>
</reference>
<organism>
    <name type="scientific">Buchnera aphidicola subsp. Baizongia pistaciae (strain Bp)</name>
    <dbReference type="NCBI Taxonomy" id="224915"/>
    <lineage>
        <taxon>Bacteria</taxon>
        <taxon>Pseudomonadati</taxon>
        <taxon>Pseudomonadota</taxon>
        <taxon>Gammaproteobacteria</taxon>
        <taxon>Enterobacterales</taxon>
        <taxon>Erwiniaceae</taxon>
        <taxon>Buchnera</taxon>
    </lineage>
</organism>
<comment type="function">
    <text evidence="1">Specifically methylates the guanine in position 1207 of 16S rRNA in the 30S particle.</text>
</comment>
<comment type="catalytic activity">
    <reaction>
        <text>guanosine(1207) in 16S rRNA + S-adenosyl-L-methionine = N(2)-methylguanosine(1207) in 16S rRNA + S-adenosyl-L-homocysteine + H(+)</text>
        <dbReference type="Rhea" id="RHEA:42736"/>
        <dbReference type="Rhea" id="RHEA-COMP:10213"/>
        <dbReference type="Rhea" id="RHEA-COMP:10214"/>
        <dbReference type="ChEBI" id="CHEBI:15378"/>
        <dbReference type="ChEBI" id="CHEBI:57856"/>
        <dbReference type="ChEBI" id="CHEBI:59789"/>
        <dbReference type="ChEBI" id="CHEBI:74269"/>
        <dbReference type="ChEBI" id="CHEBI:74481"/>
        <dbReference type="EC" id="2.1.1.172"/>
    </reaction>
</comment>
<comment type="subunit">
    <text evidence="1">Monomer.</text>
</comment>
<comment type="subcellular location">
    <subcellularLocation>
        <location evidence="2">Cytoplasm</location>
    </subcellularLocation>
</comment>
<comment type="similarity">
    <text evidence="2">Belongs to the methyltransferase superfamily. RsmC family.</text>
</comment>
<accession>Q89AI2</accession>
<proteinExistence type="inferred from homology"/>
<feature type="chain" id="PRO_0000097489" description="Ribosomal RNA small subunit methyltransferase C">
    <location>
        <begin position="1"/>
        <end position="326"/>
    </location>
</feature>
<gene>
    <name type="primary">rsmC</name>
    <name type="ordered locus">bbp_305</name>
</gene>
<protein>
    <recommendedName>
        <fullName>Ribosomal RNA small subunit methyltransferase C</fullName>
        <ecNumber>2.1.1.172</ecNumber>
    </recommendedName>
    <alternativeName>
        <fullName>16S rRNA m2G1207 methyltransferase</fullName>
    </alternativeName>
    <alternativeName>
        <fullName>rRNA (guanine-N(2)-)-methyltransferase RsmC</fullName>
    </alternativeName>
</protein>
<dbReference type="EC" id="2.1.1.172"/>
<dbReference type="EMBL" id="AE016826">
    <property type="protein sequence ID" value="AAO27030.1"/>
    <property type="molecule type" value="Genomic_DNA"/>
</dbReference>
<dbReference type="RefSeq" id="WP_011091431.1">
    <property type="nucleotide sequence ID" value="NC_004545.1"/>
</dbReference>
<dbReference type="SMR" id="Q89AI2"/>
<dbReference type="STRING" id="224915.bbp_305"/>
<dbReference type="KEGG" id="bab:bbp_305"/>
<dbReference type="eggNOG" id="COG2813">
    <property type="taxonomic scope" value="Bacteria"/>
</dbReference>
<dbReference type="HOGENOM" id="CLU_049581_0_1_6"/>
<dbReference type="OrthoDB" id="9816072at2"/>
<dbReference type="Proteomes" id="UP000000601">
    <property type="component" value="Chromosome"/>
</dbReference>
<dbReference type="GO" id="GO:0005737">
    <property type="term" value="C:cytoplasm"/>
    <property type="evidence" value="ECO:0007669"/>
    <property type="project" value="UniProtKB-SubCell"/>
</dbReference>
<dbReference type="GO" id="GO:0052914">
    <property type="term" value="F:16S rRNA (guanine(1207)-N(2))-methyltransferase activity"/>
    <property type="evidence" value="ECO:0007669"/>
    <property type="project" value="UniProtKB-EC"/>
</dbReference>
<dbReference type="CDD" id="cd02440">
    <property type="entry name" value="AdoMet_MTases"/>
    <property type="match status" value="1"/>
</dbReference>
<dbReference type="Gene3D" id="3.40.50.150">
    <property type="entry name" value="Vaccinia Virus protein VP39"/>
    <property type="match status" value="2"/>
</dbReference>
<dbReference type="InterPro" id="IPR013675">
    <property type="entry name" value="Mtase_sm_N"/>
</dbReference>
<dbReference type="InterPro" id="IPR046977">
    <property type="entry name" value="RsmC/RlmG"/>
</dbReference>
<dbReference type="InterPro" id="IPR029063">
    <property type="entry name" value="SAM-dependent_MTases_sf"/>
</dbReference>
<dbReference type="InterPro" id="IPR007848">
    <property type="entry name" value="Small_mtfrase_dom"/>
</dbReference>
<dbReference type="PANTHER" id="PTHR47816">
    <property type="entry name" value="RIBOSOMAL RNA SMALL SUBUNIT METHYLTRANSFERASE C"/>
    <property type="match status" value="1"/>
</dbReference>
<dbReference type="PANTHER" id="PTHR47816:SF4">
    <property type="entry name" value="RIBOSOMAL RNA SMALL SUBUNIT METHYLTRANSFERASE C"/>
    <property type="match status" value="1"/>
</dbReference>
<dbReference type="Pfam" id="PF05175">
    <property type="entry name" value="MTS"/>
    <property type="match status" value="1"/>
</dbReference>
<dbReference type="Pfam" id="PF08468">
    <property type="entry name" value="MTS_N"/>
    <property type="match status" value="1"/>
</dbReference>
<dbReference type="SUPFAM" id="SSF53335">
    <property type="entry name" value="S-adenosyl-L-methionine-dependent methyltransferases"/>
    <property type="match status" value="1"/>
</dbReference>
<name>RSMC_BUCBP</name>
<sequence>MSSTKNVLITGNTINFYMPNRPKLKVKMHTQCFNNFKNNQKNSMFAIIFDVLVNKKIIQNSDVIIYIWPNSKLEALFQINYIISLLSKTQKIFFLGSNRSGIKCIQNLLKKWIIITKIDSSNHCILYSGIIVLKPIFLYENFIKFNKWNNIVVKTIPGVFSYNNIDHGTKLLMSTCTKNLRWKTVLDIGCGSGVLSTYLATIFPEIKLTLIDSNIAALESSKLTLTSNNVCGEIFPSNIYSNVHYQNFDLIISNPPLHVENKLNFSIIDNIIKNSVKYLSNKGEIRIVTLKNVPCHKSFTLYFKKYTILKTSSHYKVYQANYKDRV</sequence>
<keyword id="KW-0963">Cytoplasm</keyword>
<keyword id="KW-0489">Methyltransferase</keyword>
<keyword id="KW-1185">Reference proteome</keyword>
<keyword id="KW-0698">rRNA processing</keyword>
<keyword id="KW-0949">S-adenosyl-L-methionine</keyword>
<keyword id="KW-0808">Transferase</keyword>